<accession>Q60952</accession>
<accession>E9QMB2</accession>
<accession>Q2I8G3</accession>
<accession>Q3UTR4</accession>
<accession>Q6PFF6</accession>
<accession>Q8BLC6</accession>
<name>CP250_MOUSE</name>
<protein>
    <recommendedName>
        <fullName>Centrosome-associated protein CEP250</fullName>
    </recommendedName>
    <alternativeName>
        <fullName>250 kDa centrosomal protein</fullName>
        <shortName>Cep250</shortName>
    </alternativeName>
    <alternativeName>
        <fullName>Centrosomal Nek2-associated protein 1</fullName>
        <shortName>C-Nap1</shortName>
    </alternativeName>
    <alternativeName>
        <fullName>Centrosomal protein 2</fullName>
    </alternativeName>
    <alternativeName>
        <fullName>Intranuclear matrix protein</fullName>
    </alternativeName>
</protein>
<keyword id="KW-0131">Cell cycle</keyword>
<keyword id="KW-0966">Cell projection</keyword>
<keyword id="KW-0969">Cilium</keyword>
<keyword id="KW-0970">Cilium biogenesis/degradation</keyword>
<keyword id="KW-0175">Coiled coil</keyword>
<keyword id="KW-0963">Cytoplasm</keyword>
<keyword id="KW-0206">Cytoskeleton</keyword>
<keyword id="KW-0597">Phosphoprotein</keyword>
<keyword id="KW-1185">Reference proteome</keyword>
<feature type="chain" id="PRO_0000089488" description="Centrosome-associated protein CEP250">
    <location>
        <begin position="1"/>
        <end position="2414"/>
    </location>
</feature>
<feature type="region of interest" description="Disordered" evidence="3">
    <location>
        <begin position="356"/>
        <end position="384"/>
    </location>
</feature>
<feature type="region of interest" description="Disordered" evidence="3">
    <location>
        <begin position="672"/>
        <end position="707"/>
    </location>
</feature>
<feature type="region of interest" description="Disordered" evidence="3">
    <location>
        <begin position="1191"/>
        <end position="1212"/>
    </location>
</feature>
<feature type="region of interest" description="Disordered" evidence="3">
    <location>
        <begin position="1269"/>
        <end position="1303"/>
    </location>
</feature>
<feature type="region of interest" description="Disordered" evidence="3">
    <location>
        <begin position="2050"/>
        <end position="2071"/>
    </location>
</feature>
<feature type="region of interest" description="Disordered" evidence="3">
    <location>
        <begin position="2194"/>
        <end position="2238"/>
    </location>
</feature>
<feature type="region of interest" description="Disordered" evidence="3">
    <location>
        <begin position="2275"/>
        <end position="2317"/>
    </location>
</feature>
<feature type="region of interest" description="Disordered" evidence="3">
    <location>
        <begin position="2390"/>
        <end position="2414"/>
    </location>
</feature>
<feature type="coiled-coil region" evidence="2">
    <location>
        <begin position="91"/>
        <end position="153"/>
    </location>
</feature>
<feature type="coiled-coil region" evidence="2">
    <location>
        <begin position="248"/>
        <end position="357"/>
    </location>
</feature>
<feature type="coiled-coil region" evidence="2">
    <location>
        <begin position="400"/>
        <end position="1165"/>
    </location>
</feature>
<feature type="coiled-coil region" evidence="2">
    <location>
        <begin position="1237"/>
        <end position="2200"/>
    </location>
</feature>
<feature type="coiled-coil region" evidence="2">
    <location>
        <begin position="2231"/>
        <end position="2290"/>
    </location>
</feature>
<feature type="coiled-coil region" evidence="2">
    <location>
        <begin position="2320"/>
        <end position="2345"/>
    </location>
</feature>
<feature type="compositionally biased region" description="Polar residues" evidence="3">
    <location>
        <begin position="371"/>
        <end position="381"/>
    </location>
</feature>
<feature type="compositionally biased region" description="Basic and acidic residues" evidence="3">
    <location>
        <begin position="684"/>
        <end position="704"/>
    </location>
</feature>
<feature type="compositionally biased region" description="Low complexity" evidence="3">
    <location>
        <begin position="1280"/>
        <end position="1289"/>
    </location>
</feature>
<feature type="compositionally biased region" description="Polar residues" evidence="3">
    <location>
        <begin position="2196"/>
        <end position="2209"/>
    </location>
</feature>
<feature type="compositionally biased region" description="Basic and acidic residues" evidence="3">
    <location>
        <begin position="2275"/>
        <end position="2286"/>
    </location>
</feature>
<feature type="compositionally biased region" description="Low complexity" evidence="3">
    <location>
        <begin position="2305"/>
        <end position="2317"/>
    </location>
</feature>
<feature type="modified residue" description="Phosphoserine" evidence="1">
    <location>
        <position position="2292"/>
    </location>
</feature>
<feature type="modified residue" description="Phosphoserine; by NEK2" evidence="1">
    <location>
        <position position="2389"/>
    </location>
</feature>
<feature type="modified residue" description="Phosphoserine; by NEK2" evidence="1">
    <location>
        <position position="2393"/>
    </location>
</feature>
<feature type="mutagenesis site" description="Knockin mutant mice show retinal morphological anomalies and altered electroretinographic responses to light stimuli." evidence="7">
    <location>
        <begin position="187"/>
        <end position="2414"/>
    </location>
</feature>
<feature type="sequence conflict" description="In Ref. 3; BAC32417." evidence="8" ref="3">
    <original>E</original>
    <variation>K</variation>
    <location>
        <position position="91"/>
    </location>
</feature>
<feature type="sequence conflict" description="In Ref. 1; ABA29340." evidence="8" ref="1">
    <original>S</original>
    <variation>L</variation>
    <location>
        <position position="369"/>
    </location>
</feature>
<feature type="sequence conflict" description="In Ref. 1; ABA29340." evidence="8" ref="1">
    <original>H</original>
    <variation>R</variation>
    <location>
        <position position="424"/>
    </location>
</feature>
<feature type="sequence conflict" description="In Ref. 1; ABA29340." evidence="8" ref="1">
    <original>K</original>
    <variation>R</variation>
    <location>
        <position position="437"/>
    </location>
</feature>
<feature type="sequence conflict" description="In Ref. 1; ABA29340." evidence="8" ref="1">
    <original>G</original>
    <variation>D</variation>
    <location>
        <position position="454"/>
    </location>
</feature>
<feature type="sequence conflict" description="In Ref. 1; ABA29340." evidence="8" ref="1">
    <original>K</original>
    <variation>R</variation>
    <location>
        <position position="508"/>
    </location>
</feature>
<feature type="sequence conflict" description="In Ref. 1; ABA29340." evidence="8" ref="1">
    <original>E</original>
    <variation>G</variation>
    <location>
        <position position="615"/>
    </location>
</feature>
<feature type="sequence conflict" description="In Ref. 1; ABA29340." evidence="8" ref="1">
    <original>Q</original>
    <variation>R</variation>
    <location>
        <position position="645"/>
    </location>
</feature>
<feature type="sequence conflict" description="In Ref. 4; AAB41824." evidence="8" ref="4">
    <original>A</original>
    <variation>P</variation>
    <location>
        <position position="1837"/>
    </location>
</feature>
<feature type="sequence conflict" description="In Ref. 4; AAB41824." evidence="8" ref="4">
    <original>Q</original>
    <variation>R</variation>
    <location>
        <position position="1864"/>
    </location>
</feature>
<feature type="sequence conflict" description="In Ref. 4; AAB41824." evidence="8" ref="4">
    <original>QA</original>
    <variation>RP</variation>
    <location>
        <begin position="1924"/>
        <end position="1925"/>
    </location>
</feature>
<feature type="sequence conflict" description="In Ref. 3; BAE23916." evidence="8" ref="3">
    <original>Q</original>
    <variation>E</variation>
    <location>
        <position position="1966"/>
    </location>
</feature>
<feature type="sequence conflict" description="In Ref. 5; AAH57582." evidence="8" ref="5">
    <original>Q</original>
    <variation>H</variation>
    <location>
        <position position="1974"/>
    </location>
</feature>
<feature type="sequence conflict" description="In Ref. 1; ABA29340 and 4; AAB41824." evidence="8" ref="1 4">
    <original>S</original>
    <variation>R</variation>
    <location>
        <position position="2003"/>
    </location>
</feature>
<feature type="sequence conflict" description="In Ref. 1; ABA29340 and 4; AAB41824." evidence="8" ref="1 4">
    <original>K</original>
    <variation>E</variation>
    <location>
        <position position="2040"/>
    </location>
</feature>
<feature type="sequence conflict" description="In Ref. 1; ABA29340 and 4; AAB41824." evidence="8" ref="1 4">
    <original>R</original>
    <variation>S</variation>
    <location>
        <position position="2105"/>
    </location>
</feature>
<feature type="sequence conflict" description="In Ref. 4; AAB41824." evidence="8" ref="4">
    <original>R</original>
    <variation>S</variation>
    <location>
        <position position="2192"/>
    </location>
</feature>
<feature type="sequence conflict" description="In Ref. 4; AAB41824." evidence="8" ref="4">
    <original>G</original>
    <variation>E</variation>
    <location>
        <position position="2218"/>
    </location>
</feature>
<feature type="sequence conflict" description="In Ref. 1; ABA29340 and 4; AAB41824." evidence="8" ref="1 4">
    <original>S</original>
    <variation>P</variation>
    <location>
        <position position="2221"/>
    </location>
</feature>
<sequence length="2414" mass="276814">METGSPGLNMKPQSLQLVLEGQVLALQQQMAENQAASWRKLKNSQEAQKRQATLVRKLQAKVLQYRSWCQDLEKRLEATGGLIPQRWESVEEPNLEQLLIRLEEEQQRCESLVEVNTELRLHMEKADVVNKALQEDVEKLTVDWSRARDELVRKESQWRMEQEFFKGYLRGEHGRLLNLWREVVTFRRHFLKMKSATDRDLTELKAEHARLSGSLLTCCLRLTLRAQSRESSGSGRTEESEPARLLLLVAKTQALEKEAHEKSQELMQLKSHGDLEKAELQDRVTELSALLTQSQKQNEDYEKMVKALRETMEILETNHAELMEHEASLSRNAQEEKLSLQQVIKAITQALASVEEEDTVTQSSGHEDSLQSDCNGLSQFDPQDPDRALTLVQSVLTRRQQAVQDLRQQLSGCQEAMSFLQQQHDQWEEEGRALREKLQKLTGERDALAGQTVGLQGEVDSLSRERELLQKARGELQQQLEVLEQEAWRLRRMNMELQLQGDSAQGEKLEQQEELHLAVRERERLQETLVGLEAKQSESLSELLTLREALESSRLEGELLKQERVEVAAALARAEQSIVELSGSENSLKAEVADLRAAAVKLGALNEALALDKVELNQQLLQLEQENQSLCSRVEAAEQLRSALQVDLAEAERRREALWEKKTQLETQLQKAEEAGAELQAELRGTREEKEELKDKLSEAHHQQETATAHLEQLHQDAERQEETLARAVQEKEALVRERAALEVRLQAVERDRQDLTEHVLGLRSAKEQLESNLFEAQQQNSVIQVTKGQLEVQIQTIIQAKEVIQGEVKCLKLELDAERTRAEQEWDAVARQLAQAEQEGQASLERQKVAHEEEVNRLQEKWEKERSWLQQELDKTLETLERERAELETKLREQQTEMEAIRAQREEERSQADSALYQMQLETEKERVSLLETLLRTQKELADASQQLERLRQDMKIQKLKEQETTGMLQAQLQETQQELKEAAQQHRDDLAAFQKDKLDLQKQVEDLMSQLVAHDDSQRLVKEEIEEKVKVAQECSRIQKELEKENASLALSLVEKEKRLLILQEADSVRQQELSSLRQDIQEAQEGQRELGVQVELLRQEVKEKEADFVAREAQLLEELEASRVAEQQLRASLWAQEAKATQLQLQLRSTESQLEALVAEQQPENQAQAQLASLCSVLQQALGSACESRPELRGGGDSAPTLWGPDPDQNGASRLFKRWSLPTALSPEAVALALQKLHQDVWKARQARDDLRDQVQKLVQRLTDTEAQKSQVHSELQDLQRQLSQSQEEKSKWEGRQNSLESELRDLHETAASLQSRLRQAELQKMEAQNDRELLQASKEKLSAQVEHLQACVAEAQAQADAAAVLEEDLRTARSALKLKNEELESERERAQALQEQGELKVAQGKALQENLALLAQTLSNREREVETLQAEVQELEKQREMQKAALELLSLDLKKRSREVDLQQEQIQELEQCRSVLEHLPMAVQEREQKLSVQRDQIRELENDREAQRSVLEHQLLDLEQKAQVIESQRGQIQDLKKQLGTLECLALELEESHHKVESQQKMITELEGQREMQRVALTHLTLDLEERSQELQAQSSQLHELENHSTHLAKELQERDQEVTSQRQQIDELQKQQEQLAQALERKGQELVLQKERIQVLEDQRTLQTKILEEDLEQIKHSLRERSQELASQWQLVHERADDGKSPSKGQRGSLEHLKLILRDKEKEVECQQERIQELQGHMGQLEQQLQGLHRKVGETSLLLTHREQETATLQQHLQEAKEQGELREQVLQGQLEEAQRDLAQRDHELETLRQEKQQTQDQEESMKLKTSALQAALEQAHATLKERQGELEEHREQVRRLQEELEVEGRQVRALEEVLGDLRAESREHEKAVLALQQRCAEQAQEHEAEARTLQDSWLQAQATLTEQEQELAALRAENQYSRRQEEAAVSQAEALQEALSKAQAALQEKEQSLLEQAELSHTLEASTAALQATLDTCQASARQLEEALRIREGEIQAQALQHHEVTQHLQQELCQKKEELRQLLEKAGARRSQENGIQEKQSLEQERQEETRRLLESLKELQLTVAQREEEILMLREASSPRHRALPAEKPALQPLPAQQELERLQTALRQTEAREIEWREKAQDLALSLAQSKASISSLQEITMFLQASVLERESEQQRLQEELVLSRQALEEQQSGGPHSTSRADQGPKVGQGSQSGEVETEPSPGVEEKERLTQRLERLQQAVAELEVDRSKLQCHNAQLRTALEQVERERRKLKRDSVRASRAGSLEARETMTSSPTQQDGRGSQRGSSDSVLVVELQREVALLRAQLALERKQRQDYIARSVQTSRELAGLHHSLSHSLLTVAQAPEATVLEAETRKLDESLNQSLTSPGPCLLHPSLDTTQNTHR</sequence>
<organism>
    <name type="scientific">Mus musculus</name>
    <name type="common">Mouse</name>
    <dbReference type="NCBI Taxonomy" id="10090"/>
    <lineage>
        <taxon>Eukaryota</taxon>
        <taxon>Metazoa</taxon>
        <taxon>Chordata</taxon>
        <taxon>Craniata</taxon>
        <taxon>Vertebrata</taxon>
        <taxon>Euteleostomi</taxon>
        <taxon>Mammalia</taxon>
        <taxon>Eutheria</taxon>
        <taxon>Euarchontoglires</taxon>
        <taxon>Glires</taxon>
        <taxon>Rodentia</taxon>
        <taxon>Myomorpha</taxon>
        <taxon>Muroidea</taxon>
        <taxon>Muridae</taxon>
        <taxon>Murinae</taxon>
        <taxon>Mus</taxon>
        <taxon>Mus</taxon>
    </lineage>
</organism>
<comment type="function">
    <text evidence="1">Plays an important role in centrosome cohesion during interphase. Recruits CCDC102B to the proximal ends of centrioles. Maintains centrosome cohesion by forming intercentriolar linkages. Accumulates at the proximal end of each centriole, forming supramolecular assemblies with viscous material properties that promote organelle cohesion. May be involved in ciliogenesis.</text>
</comment>
<comment type="subunit">
    <text evidence="1 4 5 8">Monomer and homodimer (Probable). Forms a complex in vitro with both NEK2 kinase and the PPP1CC catalytic subunit of protein phosphatase 1 (PP1) (By similarity). Interacts with CEP135 (By similarity). Interacts with CROCC/rootletin (PubMed:16339073). Interacts with CNTLN (By similarity). Interacts with NIN (via C-terminus) (PubMed:27565344).</text>
</comment>
<comment type="subcellular location">
    <subcellularLocation>
        <location evidence="4">Cytoplasm</location>
        <location evidence="4">Perinuclear region</location>
    </subcellularLocation>
    <subcellularLocation>
        <location evidence="4">Cytoplasm</location>
        <location evidence="4">Cytoskeleton</location>
        <location evidence="4">Microtubule organizing center</location>
        <location evidence="4">Centrosome</location>
        <location evidence="4">Centriole</location>
    </subcellularLocation>
    <subcellularLocation>
        <location evidence="4 7">Cytoplasm</location>
        <location evidence="4 7">Cytoskeleton</location>
        <location evidence="4 7">Cilium basal body</location>
    </subcellularLocation>
    <subcellularLocation>
        <location evidence="6">Cell projection</location>
        <location evidence="6">Cilium</location>
        <location evidence="6">Photoreceptor outer segment</location>
    </subcellularLocation>
    <subcellularLocation>
        <location evidence="7">Photoreceptor inner segment</location>
    </subcellularLocation>
    <text>Component of the core centrosome where it is found at the proximal ends of centrioles.</text>
</comment>
<comment type="tissue specificity">
    <text evidence="6">Expressed in the retina.</text>
</comment>
<comment type="PTM">
    <text evidence="1">Differentially phosphorylated during cell cycle. Phosphorylation may regulate association/dissociation from centrosome. During M phase of mitosis, C-terminal part is phosphorylated by NEK2, suggesting that it may trigger the dissociation from the mitotic centrosome. Dephosphorylated in vitro by the PP1 phosphatase (By similarity).</text>
</comment>
<comment type="sequence caution" evidence="8">
    <conflict type="frameshift">
        <sequence resource="EMBL-CDS" id="AAB41824"/>
    </conflict>
</comment>
<dbReference type="EMBL" id="DQ148475">
    <property type="protein sequence ID" value="ABA29340.1"/>
    <property type="molecule type" value="mRNA"/>
</dbReference>
<dbReference type="EMBL" id="AL833786">
    <property type="status" value="NOT_ANNOTATED_CDS"/>
    <property type="molecule type" value="Genomic_DNA"/>
</dbReference>
<dbReference type="EMBL" id="AK045557">
    <property type="protein sequence ID" value="BAC32417.1"/>
    <property type="molecule type" value="mRNA"/>
</dbReference>
<dbReference type="EMBL" id="AK139187">
    <property type="protein sequence ID" value="BAE23916.1"/>
    <property type="molecule type" value="mRNA"/>
</dbReference>
<dbReference type="EMBL" id="U33198">
    <property type="protein sequence ID" value="AAB41824.1"/>
    <property type="status" value="ALT_FRAME"/>
    <property type="molecule type" value="mRNA"/>
</dbReference>
<dbReference type="EMBL" id="BC057582">
    <property type="protein sequence ID" value="AAH57582.1"/>
    <property type="molecule type" value="mRNA"/>
</dbReference>
<dbReference type="CCDS" id="CCDS50771.1"/>
<dbReference type="RefSeq" id="NP_001123471.1">
    <property type="nucleotide sequence ID" value="NM_001129999.1"/>
</dbReference>
<dbReference type="RefSeq" id="NP_032409.3">
    <property type="nucleotide sequence ID" value="NM_008383.3"/>
</dbReference>
<dbReference type="RefSeq" id="NP_796191.2">
    <property type="nucleotide sequence ID" value="NM_177217.3"/>
</dbReference>
<dbReference type="SMR" id="Q60952"/>
<dbReference type="BioGRID" id="200766">
    <property type="interactions" value="14"/>
</dbReference>
<dbReference type="FunCoup" id="Q60952">
    <property type="interactions" value="1041"/>
</dbReference>
<dbReference type="IntAct" id="Q60952">
    <property type="interactions" value="8"/>
</dbReference>
<dbReference type="STRING" id="10090.ENSMUSP00000105248"/>
<dbReference type="iPTMnet" id="Q60952"/>
<dbReference type="PhosphoSitePlus" id="Q60952"/>
<dbReference type="jPOST" id="Q60952"/>
<dbReference type="PaxDb" id="10090-ENSMUSP00000105248"/>
<dbReference type="PeptideAtlas" id="Q60952"/>
<dbReference type="ProteomicsDB" id="283438"/>
<dbReference type="Pumba" id="Q60952"/>
<dbReference type="Antibodypedia" id="26072">
    <property type="antibodies" value="88 antibodies from 20 providers"/>
</dbReference>
<dbReference type="Ensembl" id="ENSMUST00000094421.11">
    <property type="protein sequence ID" value="ENSMUSP00000091988.5"/>
    <property type="gene ID" value="ENSMUSG00000038241.17"/>
</dbReference>
<dbReference type="GeneID" id="16328"/>
<dbReference type="KEGG" id="mmu:16328"/>
<dbReference type="UCSC" id="uc008nlu.2">
    <property type="organism name" value="mouse"/>
</dbReference>
<dbReference type="AGR" id="MGI:108084"/>
<dbReference type="CTD" id="11190"/>
<dbReference type="MGI" id="MGI:108084">
    <property type="gene designation" value="Cep250"/>
</dbReference>
<dbReference type="VEuPathDB" id="HostDB:ENSMUSG00000038241"/>
<dbReference type="eggNOG" id="ENOG502QTBY">
    <property type="taxonomic scope" value="Eukaryota"/>
</dbReference>
<dbReference type="GeneTree" id="ENSGT00940000161056"/>
<dbReference type="InParanoid" id="Q60952"/>
<dbReference type="OrthoDB" id="3549872at2759"/>
<dbReference type="Reactome" id="R-MMU-2565942">
    <property type="pathway name" value="Regulation of PLK1 Activity at G2/M Transition"/>
</dbReference>
<dbReference type="Reactome" id="R-MMU-380259">
    <property type="pathway name" value="Loss of Nlp from mitotic centrosomes"/>
</dbReference>
<dbReference type="Reactome" id="R-MMU-380270">
    <property type="pathway name" value="Recruitment of mitotic centrosome proteins and complexes"/>
</dbReference>
<dbReference type="Reactome" id="R-MMU-380284">
    <property type="pathway name" value="Loss of proteins required for interphase microtubule organization from the centrosome"/>
</dbReference>
<dbReference type="Reactome" id="R-MMU-380320">
    <property type="pathway name" value="Recruitment of NuMA to mitotic centrosomes"/>
</dbReference>
<dbReference type="Reactome" id="R-MMU-5620912">
    <property type="pathway name" value="Anchoring of the basal body to the plasma membrane"/>
</dbReference>
<dbReference type="Reactome" id="R-MMU-8854518">
    <property type="pathway name" value="AURKA Activation by TPX2"/>
</dbReference>
<dbReference type="BioGRID-ORCS" id="16328">
    <property type="hits" value="4 hits in 81 CRISPR screens"/>
</dbReference>
<dbReference type="ChiTaRS" id="Cep250">
    <property type="organism name" value="mouse"/>
</dbReference>
<dbReference type="PRO" id="PR:Q60952"/>
<dbReference type="Proteomes" id="UP000000589">
    <property type="component" value="Chromosome 2"/>
</dbReference>
<dbReference type="RNAct" id="Q60952">
    <property type="molecule type" value="protein"/>
</dbReference>
<dbReference type="Bgee" id="ENSMUSG00000038241">
    <property type="expression patterns" value="Expressed in retinal neural layer and 133 other cell types or tissues"/>
</dbReference>
<dbReference type="ExpressionAtlas" id="Q60952">
    <property type="expression patterns" value="baseline and differential"/>
</dbReference>
<dbReference type="GO" id="GO:0005814">
    <property type="term" value="C:centriole"/>
    <property type="evidence" value="ECO:0000314"/>
    <property type="project" value="MGI"/>
</dbReference>
<dbReference type="GO" id="GO:0036064">
    <property type="term" value="C:ciliary basal body"/>
    <property type="evidence" value="ECO:0000314"/>
    <property type="project" value="UniProtKB"/>
</dbReference>
<dbReference type="GO" id="GO:0048471">
    <property type="term" value="C:perinuclear region of cytoplasm"/>
    <property type="evidence" value="ECO:0007669"/>
    <property type="project" value="UniProtKB-SubCell"/>
</dbReference>
<dbReference type="GO" id="GO:0001917">
    <property type="term" value="C:photoreceptor inner segment"/>
    <property type="evidence" value="ECO:0000314"/>
    <property type="project" value="UniProtKB"/>
</dbReference>
<dbReference type="GO" id="GO:0001750">
    <property type="term" value="C:photoreceptor outer segment"/>
    <property type="evidence" value="ECO:0000314"/>
    <property type="project" value="UniProtKB"/>
</dbReference>
<dbReference type="GO" id="GO:0032991">
    <property type="term" value="C:protein-containing complex"/>
    <property type="evidence" value="ECO:0007669"/>
    <property type="project" value="Ensembl"/>
</dbReference>
<dbReference type="GO" id="GO:0031616">
    <property type="term" value="C:spindle pole centrosome"/>
    <property type="evidence" value="ECO:0000314"/>
    <property type="project" value="MGI"/>
</dbReference>
<dbReference type="GO" id="GO:0019904">
    <property type="term" value="F:protein domain specific binding"/>
    <property type="evidence" value="ECO:0007669"/>
    <property type="project" value="Ensembl"/>
</dbReference>
<dbReference type="GO" id="GO:0010457">
    <property type="term" value="P:centriole-centriole cohesion"/>
    <property type="evidence" value="ECO:0000250"/>
    <property type="project" value="UniProtKB"/>
</dbReference>
<dbReference type="GO" id="GO:0060271">
    <property type="term" value="P:cilium assembly"/>
    <property type="evidence" value="ECO:0000250"/>
    <property type="project" value="UniProtKB"/>
</dbReference>
<dbReference type="GO" id="GO:0050908">
    <property type="term" value="P:detection of light stimulus involved in visual perception"/>
    <property type="evidence" value="ECO:0000315"/>
    <property type="project" value="UniProtKB"/>
</dbReference>
<dbReference type="GO" id="GO:0000278">
    <property type="term" value="P:mitotic cell cycle"/>
    <property type="evidence" value="ECO:0007669"/>
    <property type="project" value="Ensembl"/>
</dbReference>
<dbReference type="GO" id="GO:1905515">
    <property type="term" value="P:non-motile cilium assembly"/>
    <property type="evidence" value="ECO:0007669"/>
    <property type="project" value="Ensembl"/>
</dbReference>
<dbReference type="GO" id="GO:1904781">
    <property type="term" value="P:positive regulation of protein localization to centrosome"/>
    <property type="evidence" value="ECO:0007669"/>
    <property type="project" value="Ensembl"/>
</dbReference>
<dbReference type="GO" id="GO:0071539">
    <property type="term" value="P:protein localization to centrosome"/>
    <property type="evidence" value="ECO:0007669"/>
    <property type="project" value="Ensembl"/>
</dbReference>
<dbReference type="GO" id="GO:0030997">
    <property type="term" value="P:regulation of centriole-centriole cohesion"/>
    <property type="evidence" value="ECO:0007669"/>
    <property type="project" value="Ensembl"/>
</dbReference>
<dbReference type="InterPro" id="IPR055167">
    <property type="entry name" value="Rootletin-like_CC"/>
</dbReference>
<dbReference type="PANTHER" id="PTHR23159">
    <property type="entry name" value="CENTROSOMAL PROTEIN 2"/>
    <property type="match status" value="1"/>
</dbReference>
<dbReference type="PANTHER" id="PTHR23159:SF31">
    <property type="entry name" value="CENTROSOME-ASSOCIATED PROTEIN CEP250 ISOFORM X1"/>
    <property type="match status" value="1"/>
</dbReference>
<dbReference type="Pfam" id="PF15035">
    <property type="entry name" value="Rootletin"/>
    <property type="match status" value="1"/>
</dbReference>
<reference key="1">
    <citation type="journal article" date="2006" name="Mol. Biol. Cell">
        <title>Rootletin interacts with C-Nap1 and may function as a physical linker between the pair of centrioles/basal bodies in cells.</title>
        <authorList>
            <person name="Yang J."/>
            <person name="Adamian M."/>
            <person name="Li T."/>
        </authorList>
    </citation>
    <scope>NUCLEOTIDE SEQUENCE [MRNA]</scope>
    <scope>SUBCELLULAR LOCATION</scope>
    <scope>INTERACTION WITH CROCC</scope>
    <source>
        <strain>C57BL/6 X 129/Sv</strain>
    </source>
</reference>
<reference key="2">
    <citation type="journal article" date="2009" name="PLoS Biol.">
        <title>Lineage-specific biology revealed by a finished genome assembly of the mouse.</title>
        <authorList>
            <person name="Church D.M."/>
            <person name="Goodstadt L."/>
            <person name="Hillier L.W."/>
            <person name="Zody M.C."/>
            <person name="Goldstein S."/>
            <person name="She X."/>
            <person name="Bult C.J."/>
            <person name="Agarwala R."/>
            <person name="Cherry J.L."/>
            <person name="DiCuccio M."/>
            <person name="Hlavina W."/>
            <person name="Kapustin Y."/>
            <person name="Meric P."/>
            <person name="Maglott D."/>
            <person name="Birtle Z."/>
            <person name="Marques A.C."/>
            <person name="Graves T."/>
            <person name="Zhou S."/>
            <person name="Teague B."/>
            <person name="Potamousis K."/>
            <person name="Churas C."/>
            <person name="Place M."/>
            <person name="Herschleb J."/>
            <person name="Runnheim R."/>
            <person name="Forrest D."/>
            <person name="Amos-Landgraf J."/>
            <person name="Schwartz D.C."/>
            <person name="Cheng Z."/>
            <person name="Lindblad-Toh K."/>
            <person name="Eichler E.E."/>
            <person name="Ponting C.P."/>
        </authorList>
    </citation>
    <scope>NUCLEOTIDE SEQUENCE [LARGE SCALE GENOMIC DNA]</scope>
    <source>
        <strain>C57BL/6J</strain>
    </source>
</reference>
<reference key="3">
    <citation type="journal article" date="2005" name="Science">
        <title>The transcriptional landscape of the mammalian genome.</title>
        <authorList>
            <person name="Carninci P."/>
            <person name="Kasukawa T."/>
            <person name="Katayama S."/>
            <person name="Gough J."/>
            <person name="Frith M.C."/>
            <person name="Maeda N."/>
            <person name="Oyama R."/>
            <person name="Ravasi T."/>
            <person name="Lenhard B."/>
            <person name="Wells C."/>
            <person name="Kodzius R."/>
            <person name="Shimokawa K."/>
            <person name="Bajic V.B."/>
            <person name="Brenner S.E."/>
            <person name="Batalov S."/>
            <person name="Forrest A.R."/>
            <person name="Zavolan M."/>
            <person name="Davis M.J."/>
            <person name="Wilming L.G."/>
            <person name="Aidinis V."/>
            <person name="Allen J.E."/>
            <person name="Ambesi-Impiombato A."/>
            <person name="Apweiler R."/>
            <person name="Aturaliya R.N."/>
            <person name="Bailey T.L."/>
            <person name="Bansal M."/>
            <person name="Baxter L."/>
            <person name="Beisel K.W."/>
            <person name="Bersano T."/>
            <person name="Bono H."/>
            <person name="Chalk A.M."/>
            <person name="Chiu K.P."/>
            <person name="Choudhary V."/>
            <person name="Christoffels A."/>
            <person name="Clutterbuck D.R."/>
            <person name="Crowe M.L."/>
            <person name="Dalla E."/>
            <person name="Dalrymple B.P."/>
            <person name="de Bono B."/>
            <person name="Della Gatta G."/>
            <person name="di Bernardo D."/>
            <person name="Down T."/>
            <person name="Engstrom P."/>
            <person name="Fagiolini M."/>
            <person name="Faulkner G."/>
            <person name="Fletcher C.F."/>
            <person name="Fukushima T."/>
            <person name="Furuno M."/>
            <person name="Futaki S."/>
            <person name="Gariboldi M."/>
            <person name="Georgii-Hemming P."/>
            <person name="Gingeras T.R."/>
            <person name="Gojobori T."/>
            <person name="Green R.E."/>
            <person name="Gustincich S."/>
            <person name="Harbers M."/>
            <person name="Hayashi Y."/>
            <person name="Hensch T.K."/>
            <person name="Hirokawa N."/>
            <person name="Hill D."/>
            <person name="Huminiecki L."/>
            <person name="Iacono M."/>
            <person name="Ikeo K."/>
            <person name="Iwama A."/>
            <person name="Ishikawa T."/>
            <person name="Jakt M."/>
            <person name="Kanapin A."/>
            <person name="Katoh M."/>
            <person name="Kawasawa Y."/>
            <person name="Kelso J."/>
            <person name="Kitamura H."/>
            <person name="Kitano H."/>
            <person name="Kollias G."/>
            <person name="Krishnan S.P."/>
            <person name="Kruger A."/>
            <person name="Kummerfeld S.K."/>
            <person name="Kurochkin I.V."/>
            <person name="Lareau L.F."/>
            <person name="Lazarevic D."/>
            <person name="Lipovich L."/>
            <person name="Liu J."/>
            <person name="Liuni S."/>
            <person name="McWilliam S."/>
            <person name="Madan Babu M."/>
            <person name="Madera M."/>
            <person name="Marchionni L."/>
            <person name="Matsuda H."/>
            <person name="Matsuzawa S."/>
            <person name="Miki H."/>
            <person name="Mignone F."/>
            <person name="Miyake S."/>
            <person name="Morris K."/>
            <person name="Mottagui-Tabar S."/>
            <person name="Mulder N."/>
            <person name="Nakano N."/>
            <person name="Nakauchi H."/>
            <person name="Ng P."/>
            <person name="Nilsson R."/>
            <person name="Nishiguchi S."/>
            <person name="Nishikawa S."/>
            <person name="Nori F."/>
            <person name="Ohara O."/>
            <person name="Okazaki Y."/>
            <person name="Orlando V."/>
            <person name="Pang K.C."/>
            <person name="Pavan W.J."/>
            <person name="Pavesi G."/>
            <person name="Pesole G."/>
            <person name="Petrovsky N."/>
            <person name="Piazza S."/>
            <person name="Reed J."/>
            <person name="Reid J.F."/>
            <person name="Ring B.Z."/>
            <person name="Ringwald M."/>
            <person name="Rost B."/>
            <person name="Ruan Y."/>
            <person name="Salzberg S.L."/>
            <person name="Sandelin A."/>
            <person name="Schneider C."/>
            <person name="Schoenbach C."/>
            <person name="Sekiguchi K."/>
            <person name="Semple C.A."/>
            <person name="Seno S."/>
            <person name="Sessa L."/>
            <person name="Sheng Y."/>
            <person name="Shibata Y."/>
            <person name="Shimada H."/>
            <person name="Shimada K."/>
            <person name="Silva D."/>
            <person name="Sinclair B."/>
            <person name="Sperling S."/>
            <person name="Stupka E."/>
            <person name="Sugiura K."/>
            <person name="Sultana R."/>
            <person name="Takenaka Y."/>
            <person name="Taki K."/>
            <person name="Tammoja K."/>
            <person name="Tan S.L."/>
            <person name="Tang S."/>
            <person name="Taylor M.S."/>
            <person name="Tegner J."/>
            <person name="Teichmann S.A."/>
            <person name="Ueda H.R."/>
            <person name="van Nimwegen E."/>
            <person name="Verardo R."/>
            <person name="Wei C.L."/>
            <person name="Yagi K."/>
            <person name="Yamanishi H."/>
            <person name="Zabarovsky E."/>
            <person name="Zhu S."/>
            <person name="Zimmer A."/>
            <person name="Hide W."/>
            <person name="Bult C."/>
            <person name="Grimmond S.M."/>
            <person name="Teasdale R.D."/>
            <person name="Liu E.T."/>
            <person name="Brusic V."/>
            <person name="Quackenbush J."/>
            <person name="Wahlestedt C."/>
            <person name="Mattick J.S."/>
            <person name="Hume D.A."/>
            <person name="Kai C."/>
            <person name="Sasaki D."/>
            <person name="Tomaru Y."/>
            <person name="Fukuda S."/>
            <person name="Kanamori-Katayama M."/>
            <person name="Suzuki M."/>
            <person name="Aoki J."/>
            <person name="Arakawa T."/>
            <person name="Iida J."/>
            <person name="Imamura K."/>
            <person name="Itoh M."/>
            <person name="Kato T."/>
            <person name="Kawaji H."/>
            <person name="Kawagashira N."/>
            <person name="Kawashima T."/>
            <person name="Kojima M."/>
            <person name="Kondo S."/>
            <person name="Konno H."/>
            <person name="Nakano K."/>
            <person name="Ninomiya N."/>
            <person name="Nishio T."/>
            <person name="Okada M."/>
            <person name="Plessy C."/>
            <person name="Shibata K."/>
            <person name="Shiraki T."/>
            <person name="Suzuki S."/>
            <person name="Tagami M."/>
            <person name="Waki K."/>
            <person name="Watahiki A."/>
            <person name="Okamura-Oho Y."/>
            <person name="Suzuki H."/>
            <person name="Kawai J."/>
            <person name="Hayashizaki Y."/>
        </authorList>
    </citation>
    <scope>NUCLEOTIDE SEQUENCE [LARGE SCALE MRNA] OF 1-686 AND 1966-2414</scope>
    <source>
        <strain>C57BL/6J</strain>
        <tissue>Cerebellum</tissue>
        <tissue>Corpora quadrigemina</tissue>
    </source>
</reference>
<reference key="4">
    <citation type="journal article" date="1996" name="Biochim. Biophys. Acta">
        <title>INMP, a novel intranuclear matrix protein related to the family of intermediate filament-like proteins: molecular cloning and sequence analysis.</title>
        <authorList>
            <person name="Menz K."/>
            <person name="Radomski N."/>
            <person name="Jost E."/>
        </authorList>
    </citation>
    <scope>NUCLEOTIDE SEQUENCE [MRNA] OF 1806-2414</scope>
    <source>
        <tissue>Macrophage</tissue>
    </source>
</reference>
<reference key="5">
    <citation type="journal article" date="2004" name="Genome Res.">
        <title>The status, quality, and expansion of the NIH full-length cDNA project: the Mammalian Gene Collection (MGC).</title>
        <authorList>
            <consortium name="The MGC Project Team"/>
        </authorList>
    </citation>
    <scope>NUCLEOTIDE SEQUENCE [LARGE SCALE MRNA] OF 1872-2414</scope>
    <source>
        <strain>C57BL/6J</strain>
        <tissue>Brain</tissue>
    </source>
</reference>
<reference key="6">
    <citation type="journal article" date="2010" name="Cell">
        <title>A tissue-specific atlas of mouse protein phosphorylation and expression.</title>
        <authorList>
            <person name="Huttlin E.L."/>
            <person name="Jedrychowski M.P."/>
            <person name="Elias J.E."/>
            <person name="Goswami T."/>
            <person name="Rad R."/>
            <person name="Beausoleil S.A."/>
            <person name="Villen J."/>
            <person name="Haas W."/>
            <person name="Sowa M.E."/>
            <person name="Gygi S.P."/>
        </authorList>
    </citation>
    <scope>IDENTIFICATION BY MASS SPECTROMETRY [LARGE SCALE ANALYSIS]</scope>
    <source>
        <tissue>Spleen</tissue>
    </source>
</reference>
<reference key="7">
    <citation type="journal article" date="2016" name="Cell">
        <title>Cell-type-specific alternative splicing governs cell fate in the developing cerebral cortex.</title>
        <authorList>
            <person name="Zhang X."/>
            <person name="Chen M.H."/>
            <person name="Wu X."/>
            <person name="Kodani A."/>
            <person name="Fan J."/>
            <person name="Doan R."/>
            <person name="Ozawa M."/>
            <person name="Ma J."/>
            <person name="Yoshida N."/>
            <person name="Reiter J.F."/>
            <person name="Black D.L."/>
            <person name="Kharchenko P.V."/>
            <person name="Sharp P.A."/>
            <person name="Walsh C.A."/>
        </authorList>
    </citation>
    <scope>INTERACTION WITH NIN</scope>
</reference>
<reference key="8">
    <citation type="journal article" date="2016" name="PLoS ONE">
        <title>Novel candidate genes and a wide spectrum of structural and point mutations responsible for inherited retinal dystrophies revealed by exome sequencing.</title>
        <authorList>
            <person name="de Castro-Miro M."/>
            <person name="Tonda R."/>
            <person name="Escudero-Ferruz P."/>
            <person name="Andres R."/>
            <person name="Mayor-Lorenzo A."/>
            <person name="Castro J."/>
            <person name="Ciccioli M."/>
            <person name="Hidalgo D.A."/>
            <person name="Rodriguez-Ezcurra J.J."/>
            <person name="Farrando J."/>
            <person name="Perez-Santonja J.J."/>
            <person name="Cormand B."/>
            <person name="Marfany G."/>
            <person name="Gonzalez-Duarte R."/>
        </authorList>
    </citation>
    <scope>TISSUE SPECIFICITY</scope>
    <scope>SUBCELLULAR LOCATION</scope>
</reference>
<reference key="9">
    <citation type="journal article" date="2019" name="Hum. Mutat.">
        <title>Functional characterization of CEP250 variant identified in nonsyndromic retinitis pigmentosa.</title>
        <authorList>
            <person name="Huang X.F."/>
            <person name="Xiang L."/>
            <person name="Fang X.L."/>
            <person name="Liu W.Q."/>
            <person name="Zhuang Y.Y."/>
            <person name="Chen Z.J."/>
            <person name="Shen R.J."/>
            <person name="Cheng W."/>
            <person name="Han R.Y."/>
            <person name="Zheng S.S."/>
            <person name="Chen X.J."/>
            <person name="Liu X."/>
            <person name="Jin Z.B."/>
        </authorList>
    </citation>
    <scope>SUBCELLULAR LOCATION</scope>
    <scope>MUTAGENESIS OF 187-ARG--ARG-2414</scope>
</reference>
<proteinExistence type="evidence at protein level"/>
<gene>
    <name type="primary">Cep250</name>
    <name type="synonym">Cep2</name>
    <name type="synonym">Inmp</name>
</gene>
<evidence type="ECO:0000250" key="1">
    <source>
        <dbReference type="UniProtKB" id="Q9BV73"/>
    </source>
</evidence>
<evidence type="ECO:0000255" key="2"/>
<evidence type="ECO:0000256" key="3">
    <source>
        <dbReference type="SAM" id="MobiDB-lite"/>
    </source>
</evidence>
<evidence type="ECO:0000269" key="4">
    <source>
    </source>
</evidence>
<evidence type="ECO:0000269" key="5">
    <source>
    </source>
</evidence>
<evidence type="ECO:0000269" key="6">
    <source>
    </source>
</evidence>
<evidence type="ECO:0000269" key="7">
    <source>
    </source>
</evidence>
<evidence type="ECO:0000305" key="8"/>